<proteinExistence type="evidence at protein level"/>
<accession>P24506</accession>
<feature type="chain" id="PRO_0000183984" description="Synaptotagmin-B">
    <location>
        <begin position="1"/>
        <end position="439"/>
    </location>
</feature>
<feature type="topological domain" description="Vesicular" evidence="2">
    <location>
        <begin position="1"/>
        <end position="74"/>
    </location>
</feature>
<feature type="transmembrane region" description="Helical" evidence="2">
    <location>
        <begin position="75"/>
        <end position="101"/>
    </location>
</feature>
<feature type="topological domain" description="Cytoplasmic" evidence="2">
    <location>
        <begin position="102"/>
        <end position="439"/>
    </location>
</feature>
<feature type="domain" description="C2 1" evidence="3">
    <location>
        <begin position="159"/>
        <end position="278"/>
    </location>
</feature>
<feature type="domain" description="C2 2" evidence="3">
    <location>
        <begin position="290"/>
        <end position="423"/>
    </location>
</feature>
<feature type="region of interest" description="Disordered" evidence="4">
    <location>
        <begin position="113"/>
        <end position="155"/>
    </location>
</feature>
<feature type="region of interest" description="Phospholipid binding" evidence="5">
    <location>
        <begin position="153"/>
        <end position="399"/>
    </location>
</feature>
<feature type="compositionally biased region" description="Basic and acidic residues" evidence="4">
    <location>
        <begin position="119"/>
        <end position="129"/>
    </location>
</feature>
<feature type="compositionally biased region" description="Acidic residues" evidence="4">
    <location>
        <begin position="135"/>
        <end position="151"/>
    </location>
</feature>
<feature type="binding site" evidence="3">
    <location>
        <position position="189"/>
    </location>
    <ligand>
        <name>Ca(2+)</name>
        <dbReference type="ChEBI" id="CHEBI:29108"/>
        <label>2</label>
    </ligand>
</feature>
<feature type="binding site" evidence="3">
    <location>
        <position position="190"/>
    </location>
    <ligand>
        <name>Ca(2+)</name>
        <dbReference type="ChEBI" id="CHEBI:29108"/>
        <label>1</label>
    </ligand>
</feature>
<feature type="binding site" evidence="3">
    <location>
        <position position="190"/>
    </location>
    <ligand>
        <name>Ca(2+)</name>
        <dbReference type="ChEBI" id="CHEBI:29108"/>
        <label>2</label>
    </ligand>
</feature>
<feature type="binding site" evidence="3">
    <location>
        <position position="196"/>
    </location>
    <ligand>
        <name>Ca(2+)</name>
        <dbReference type="ChEBI" id="CHEBI:29108"/>
        <label>1</label>
    </ligand>
</feature>
<feature type="binding site" evidence="3">
    <location>
        <position position="248"/>
    </location>
    <ligand>
        <name>Ca(2+)</name>
        <dbReference type="ChEBI" id="CHEBI:29108"/>
        <label>1</label>
    </ligand>
</feature>
<feature type="binding site" evidence="3">
    <location>
        <position position="248"/>
    </location>
    <ligand>
        <name>Ca(2+)</name>
        <dbReference type="ChEBI" id="CHEBI:29108"/>
        <label>2</label>
    </ligand>
</feature>
<feature type="binding site" evidence="3">
    <location>
        <position position="249"/>
    </location>
    <ligand>
        <name>Ca(2+)</name>
        <dbReference type="ChEBI" id="CHEBI:29108"/>
        <label>1</label>
    </ligand>
</feature>
<feature type="binding site" evidence="3">
    <location>
        <position position="250"/>
    </location>
    <ligand>
        <name>Ca(2+)</name>
        <dbReference type="ChEBI" id="CHEBI:29108"/>
        <label>1</label>
    </ligand>
</feature>
<feature type="binding site" evidence="3">
    <location>
        <position position="250"/>
    </location>
    <ligand>
        <name>Ca(2+)</name>
        <dbReference type="ChEBI" id="CHEBI:29108"/>
        <label>2</label>
    </ligand>
</feature>
<feature type="binding site" evidence="3">
    <location>
        <position position="250"/>
    </location>
    <ligand>
        <name>Ca(2+)</name>
        <dbReference type="ChEBI" id="CHEBI:29108"/>
        <label>3</label>
    </ligand>
</feature>
<feature type="binding site" evidence="3">
    <location>
        <position position="253"/>
    </location>
    <ligand>
        <name>Ca(2+)</name>
        <dbReference type="ChEBI" id="CHEBI:29108"/>
        <label>3</label>
    </ligand>
</feature>
<feature type="binding site" evidence="3">
    <location>
        <position position="254"/>
    </location>
    <ligand>
        <name>Ca(2+)</name>
        <dbReference type="ChEBI" id="CHEBI:29108"/>
        <label>3</label>
    </ligand>
</feature>
<feature type="binding site" evidence="3">
    <location>
        <position position="256"/>
    </location>
    <ligand>
        <name>Ca(2+)</name>
        <dbReference type="ChEBI" id="CHEBI:29108"/>
        <label>2</label>
    </ligand>
</feature>
<feature type="binding site" evidence="3">
    <location>
        <position position="256"/>
    </location>
    <ligand>
        <name>Ca(2+)</name>
        <dbReference type="ChEBI" id="CHEBI:29108"/>
        <label>3</label>
    </ligand>
</feature>
<feature type="binding site" evidence="3">
    <location>
        <position position="321"/>
    </location>
    <ligand>
        <name>Ca(2+)</name>
        <dbReference type="ChEBI" id="CHEBI:29108"/>
        <label>4</label>
    </ligand>
</feature>
<feature type="binding site" evidence="3">
    <location>
        <position position="321"/>
    </location>
    <ligand>
        <name>Ca(2+)</name>
        <dbReference type="ChEBI" id="CHEBI:29108"/>
        <label>5</label>
    </ligand>
</feature>
<feature type="binding site" evidence="3">
    <location>
        <position position="327"/>
    </location>
    <ligand>
        <name>Ca(2+)</name>
        <dbReference type="ChEBI" id="CHEBI:29108"/>
        <label>4</label>
    </ligand>
</feature>
<feature type="binding site" evidence="3">
    <location>
        <position position="381"/>
    </location>
    <ligand>
        <name>Ca(2+)</name>
        <dbReference type="ChEBI" id="CHEBI:29108"/>
        <label>4</label>
    </ligand>
</feature>
<feature type="binding site" evidence="3">
    <location>
        <position position="381"/>
    </location>
    <ligand>
        <name>Ca(2+)</name>
        <dbReference type="ChEBI" id="CHEBI:29108"/>
        <label>5</label>
    </ligand>
</feature>
<feature type="binding site" evidence="3">
    <location>
        <position position="383"/>
    </location>
    <ligand>
        <name>Ca(2+)</name>
        <dbReference type="ChEBI" id="CHEBI:29108"/>
        <label>4</label>
    </ligand>
</feature>
<feature type="binding site" evidence="3">
    <location>
        <position position="383"/>
    </location>
    <ligand>
        <name>Ca(2+)</name>
        <dbReference type="ChEBI" id="CHEBI:29108"/>
        <label>5</label>
    </ligand>
</feature>
<feature type="binding site" evidence="3">
    <location>
        <position position="389"/>
    </location>
    <ligand>
        <name>Ca(2+)</name>
        <dbReference type="ChEBI" id="CHEBI:29108"/>
        <label>5</label>
    </ligand>
</feature>
<feature type="glycosylation site" description="N-linked (GlcNAc...) asparagine" evidence="2">
    <location>
        <position position="6"/>
    </location>
</feature>
<feature type="glycosylation site" description="N-linked (GlcNAc...) asparagine" evidence="2">
    <location>
        <position position="46"/>
    </location>
</feature>
<gene>
    <name type="primary">P65-B</name>
</gene>
<name>SY62_DIPOM</name>
<reference key="1">
    <citation type="journal article" date="1991" name="Neuron">
        <title>Differential expression of the p65 gene family.</title>
        <authorList>
            <person name="Wendland B."/>
            <person name="Miller K.G."/>
            <person name="Schilling J."/>
            <person name="Scheller R.H."/>
        </authorList>
    </citation>
    <scope>NUCLEOTIDE SEQUENCE [MRNA]</scope>
    <scope>PARTIAL PROTEIN SEQUENCE</scope>
</reference>
<keyword id="KW-0106">Calcium</keyword>
<keyword id="KW-0968">Cytoplasmic vesicle</keyword>
<keyword id="KW-0903">Direct protein sequencing</keyword>
<keyword id="KW-0325">Glycoprotein</keyword>
<keyword id="KW-0472">Membrane</keyword>
<keyword id="KW-0479">Metal-binding</keyword>
<keyword id="KW-0677">Repeat</keyword>
<keyword id="KW-0770">Synapse</keyword>
<keyword id="KW-0812">Transmembrane</keyword>
<keyword id="KW-1133">Transmembrane helix</keyword>
<organism>
    <name type="scientific">Diplobatis ommata</name>
    <name type="common">Ocellated electric ray</name>
    <name type="synonym">Discopyge ommata</name>
    <dbReference type="NCBI Taxonomy" id="1870830"/>
    <lineage>
        <taxon>Eukaryota</taxon>
        <taxon>Metazoa</taxon>
        <taxon>Chordata</taxon>
        <taxon>Craniata</taxon>
        <taxon>Vertebrata</taxon>
        <taxon>Chondrichthyes</taxon>
        <taxon>Elasmobranchii</taxon>
        <taxon>Batoidea</taxon>
        <taxon>Torpediniformes</taxon>
        <taxon>Narcinidae</taxon>
        <taxon>Diplobatis</taxon>
    </lineage>
</organism>
<dbReference type="EMBL" id="M64276">
    <property type="protein sequence ID" value="AAA49228.1"/>
    <property type="molecule type" value="mRNA"/>
</dbReference>
<dbReference type="PIR" id="JH0414">
    <property type="entry name" value="JH0414"/>
</dbReference>
<dbReference type="SMR" id="P24506"/>
<dbReference type="GlyCosmos" id="P24506">
    <property type="glycosylation" value="2 sites, No reported glycans"/>
</dbReference>
<dbReference type="GO" id="GO:0030424">
    <property type="term" value="C:axon"/>
    <property type="evidence" value="ECO:0007669"/>
    <property type="project" value="TreeGrafter"/>
</dbReference>
<dbReference type="GO" id="GO:0031045">
    <property type="term" value="C:dense core granule"/>
    <property type="evidence" value="ECO:0007669"/>
    <property type="project" value="TreeGrafter"/>
</dbReference>
<dbReference type="GO" id="GO:0005886">
    <property type="term" value="C:plasma membrane"/>
    <property type="evidence" value="ECO:0007669"/>
    <property type="project" value="TreeGrafter"/>
</dbReference>
<dbReference type="GO" id="GO:0030672">
    <property type="term" value="C:synaptic vesicle membrane"/>
    <property type="evidence" value="ECO:0007669"/>
    <property type="project" value="UniProtKB-SubCell"/>
</dbReference>
<dbReference type="GO" id="GO:0005509">
    <property type="term" value="F:calcium ion binding"/>
    <property type="evidence" value="ECO:0007669"/>
    <property type="project" value="TreeGrafter"/>
</dbReference>
<dbReference type="GO" id="GO:0005544">
    <property type="term" value="F:calcium-dependent phospholipid binding"/>
    <property type="evidence" value="ECO:0007669"/>
    <property type="project" value="TreeGrafter"/>
</dbReference>
<dbReference type="GO" id="GO:0030276">
    <property type="term" value="F:clathrin binding"/>
    <property type="evidence" value="ECO:0007669"/>
    <property type="project" value="TreeGrafter"/>
</dbReference>
<dbReference type="GO" id="GO:0001786">
    <property type="term" value="F:phosphatidylserine binding"/>
    <property type="evidence" value="ECO:0007669"/>
    <property type="project" value="TreeGrafter"/>
</dbReference>
<dbReference type="GO" id="GO:0000149">
    <property type="term" value="F:SNARE binding"/>
    <property type="evidence" value="ECO:0007669"/>
    <property type="project" value="TreeGrafter"/>
</dbReference>
<dbReference type="GO" id="GO:0048791">
    <property type="term" value="P:calcium ion-regulated exocytosis of neurotransmitter"/>
    <property type="evidence" value="ECO:0007669"/>
    <property type="project" value="TreeGrafter"/>
</dbReference>
<dbReference type="GO" id="GO:0048488">
    <property type="term" value="P:synaptic vesicle endocytosis"/>
    <property type="evidence" value="ECO:0007669"/>
    <property type="project" value="TreeGrafter"/>
</dbReference>
<dbReference type="CDD" id="cd08385">
    <property type="entry name" value="C2A_Synaptotagmin-1-5-6-9-10"/>
    <property type="match status" value="1"/>
</dbReference>
<dbReference type="CDD" id="cd08402">
    <property type="entry name" value="C2B_Synaptotagmin-1"/>
    <property type="match status" value="1"/>
</dbReference>
<dbReference type="CDD" id="cd21964">
    <property type="entry name" value="Syt2_N"/>
    <property type="match status" value="1"/>
</dbReference>
<dbReference type="FunFam" id="2.60.40.150:FF:000007">
    <property type="entry name" value="Synaptotagmin 1"/>
    <property type="match status" value="1"/>
</dbReference>
<dbReference type="FunFam" id="2.60.40.150:FF:000016">
    <property type="entry name" value="Synaptotagmin 1"/>
    <property type="match status" value="1"/>
</dbReference>
<dbReference type="Gene3D" id="2.60.40.150">
    <property type="entry name" value="C2 domain"/>
    <property type="match status" value="2"/>
</dbReference>
<dbReference type="InterPro" id="IPR000008">
    <property type="entry name" value="C2_dom"/>
</dbReference>
<dbReference type="InterPro" id="IPR035892">
    <property type="entry name" value="C2_domain_sf"/>
</dbReference>
<dbReference type="InterPro" id="IPR001565">
    <property type="entry name" value="Synaptotagmin"/>
</dbReference>
<dbReference type="PANTHER" id="PTHR10024">
    <property type="entry name" value="SYNAPTOTAGMIN"/>
    <property type="match status" value="1"/>
</dbReference>
<dbReference type="PANTHER" id="PTHR10024:SF223">
    <property type="entry name" value="SYNAPTOTAGMIN-2"/>
    <property type="match status" value="1"/>
</dbReference>
<dbReference type="Pfam" id="PF00168">
    <property type="entry name" value="C2"/>
    <property type="match status" value="2"/>
</dbReference>
<dbReference type="PRINTS" id="PR00360">
    <property type="entry name" value="C2DOMAIN"/>
</dbReference>
<dbReference type="PRINTS" id="PR00399">
    <property type="entry name" value="SYNAPTOTAGMN"/>
</dbReference>
<dbReference type="SMART" id="SM00239">
    <property type="entry name" value="C2"/>
    <property type="match status" value="2"/>
</dbReference>
<dbReference type="SUPFAM" id="SSF49562">
    <property type="entry name" value="C2 domain (Calcium/lipid-binding domain, CaLB)"/>
    <property type="match status" value="2"/>
</dbReference>
<dbReference type="PROSITE" id="PS50004">
    <property type="entry name" value="C2"/>
    <property type="match status" value="2"/>
</dbReference>
<protein>
    <recommendedName>
        <fullName>Synaptotagmin-B</fullName>
    </recommendedName>
    <alternativeName>
        <fullName>Synaptic vesicle protein O-p65-B</fullName>
    </alternativeName>
</protein>
<sequence>MQAEMNQSAEVTMKTFFTMKTRETHPQAFVAPMATATMMPIDTGDNSTEAGVPGEGKNDVFEKLKEKFMNELQKIPLPPWALIAIAIVSGLLLLTCCLCICKKCCCKKKKNKKEKGKGKKNDINMKDVKGSGGNQDDDDAETGLTEGEDKEEEAKEEEKLGKIQFSLDYDFQANQLTVGIIQAAELPALDMGGTSDPYVKVFLLPDKKKKYETKVQKKTLNPTFNESFVFKVPYQELGGKTLMMAVYDFDRFSKHDCIGQVTVLMTKVDLGQQLEEWRDLESAEKEEPEKLGDICTSLRYVPTAGKLTVCILEAKNLKKMDVGGLSDPYVKIHLLQNGKRLKKKKTTVKKNTLNPYYNESFSFEIPFEQIQKVQVCVTVLDYDKIGKNDAIGKIFVGSNASGTELRHWSDMLANPRRPIAQWHSLKPEEEVDVALGLKK</sequence>
<evidence type="ECO:0000250" key="1"/>
<evidence type="ECO:0000255" key="2"/>
<evidence type="ECO:0000255" key="3">
    <source>
        <dbReference type="PROSITE-ProRule" id="PRU00041"/>
    </source>
</evidence>
<evidence type="ECO:0000256" key="4">
    <source>
        <dbReference type="SAM" id="MobiDB-lite"/>
    </source>
</evidence>
<evidence type="ECO:0000305" key="5"/>
<comment type="function">
    <text>May have a regulatory role in the membrane interactions during trafficking of synaptic vesicles at the active zone of the synapse. It binds acidic phospholipids with a specificity that requires the presence of both an acidic head group and a diacyl backbone.</text>
</comment>
<comment type="cofactor">
    <cofactor evidence="3">
        <name>Ca(2+)</name>
        <dbReference type="ChEBI" id="CHEBI:29108"/>
    </cofactor>
    <text evidence="1">Binds 3 Ca(2+) ions per subunit. The ions are bound to the C2 domains.</text>
</comment>
<comment type="subunit">
    <text>Homodimer or homotrimer (possible).</text>
</comment>
<comment type="subcellular location">
    <subcellularLocation>
        <location>Cytoplasmic vesicle</location>
        <location>Secretory vesicle</location>
        <location>Synaptic vesicle membrane</location>
        <topology>Single-pass membrane protein</topology>
    </subcellularLocation>
    <subcellularLocation>
        <location>Synapse</location>
    </subcellularLocation>
    <text>Synaptic vesicles in neurons.</text>
</comment>
<comment type="tissue specificity">
    <text>Spinal cord, brainstem, midbrain and electric organ.</text>
</comment>
<comment type="similarity">
    <text evidence="5">Belongs to the synaptotagmin family.</text>
</comment>